<dbReference type="Proteomes" id="UP000189706">
    <property type="component" value="Unplaced"/>
</dbReference>
<dbReference type="GO" id="GO:0005743">
    <property type="term" value="C:mitochondrial inner membrane"/>
    <property type="evidence" value="ECO:0007669"/>
    <property type="project" value="UniProtKB-SubCell"/>
</dbReference>
<organism>
    <name type="scientific">Mesocricetus auratus</name>
    <name type="common">Golden hamster</name>
    <dbReference type="NCBI Taxonomy" id="10036"/>
    <lineage>
        <taxon>Eukaryota</taxon>
        <taxon>Metazoa</taxon>
        <taxon>Chordata</taxon>
        <taxon>Craniata</taxon>
        <taxon>Vertebrata</taxon>
        <taxon>Euteleostomi</taxon>
        <taxon>Mammalia</taxon>
        <taxon>Eutheria</taxon>
        <taxon>Euarchontoglires</taxon>
        <taxon>Glires</taxon>
        <taxon>Rodentia</taxon>
        <taxon>Myomorpha</taxon>
        <taxon>Muroidea</taxon>
        <taxon>Cricetidae</taxon>
        <taxon>Cricetinae</taxon>
        <taxon>Mesocricetus</taxon>
    </lineage>
</organism>
<keyword id="KW-0472">Membrane</keyword>
<keyword id="KW-0496">Mitochondrion</keyword>
<keyword id="KW-0999">Mitochondrion inner membrane</keyword>
<keyword id="KW-1185">Reference proteome</keyword>
<name>MIC60_MESAU</name>
<gene>
    <name evidence="1" type="primary">IMMT</name>
    <name type="synonym">MIC60</name>
</gene>
<evidence type="ECO:0000250" key="1">
    <source>
        <dbReference type="UniProtKB" id="Q16891"/>
    </source>
</evidence>
<evidence type="ECO:0000250" key="2">
    <source>
        <dbReference type="UniProtKB" id="Q8CAQ8"/>
    </source>
</evidence>
<evidence type="ECO:0000305" key="3"/>
<proteinExistence type="evidence at protein level"/>
<feature type="chain" id="PRO_0000394417" description="MICOS complex subunit MIC60">
    <location>
        <begin position="1" status="less than"/>
        <end position="22" status="greater than"/>
    </location>
</feature>
<feature type="non-consecutive residues" evidence="3">
    <location>
        <begin position="13"/>
        <end position="14"/>
    </location>
</feature>
<feature type="non-terminal residue">
    <location>
        <position position="1"/>
    </location>
</feature>
<feature type="non-terminal residue">
    <location>
        <position position="22"/>
    </location>
</feature>
<sequence>VVSQYHELVVQARLSEQELEFR</sequence>
<protein>
    <recommendedName>
        <fullName>MICOS complex subunit MIC60</fullName>
    </recommendedName>
    <alternativeName>
        <fullName evidence="1">Mitochondrial inner membrane protein</fullName>
    </alternativeName>
    <alternativeName>
        <fullName evidence="1">Mitofilin</fullName>
    </alternativeName>
</protein>
<reference key="1">
    <citation type="journal article" date="2010" name="Asian J. Androl.">
        <title>Glucose-regulated protein precursor (GRP78) and tumor rejection antigen (GP96) are unique to hamster caput epididymal spermatozoa.</title>
        <authorList>
            <person name="Kameshwari D.B."/>
            <person name="Bhande S."/>
            <person name="Sundaram C.S."/>
            <person name="Kota V."/>
            <person name="Siva A.B."/>
            <person name="Shivaji S."/>
        </authorList>
    </citation>
    <scope>IDENTIFICATION BY MASS SPECTROMETRY</scope>
</reference>
<comment type="function">
    <text evidence="1">Component of the MICOS complex, a large protein complex of the mitochondrial inner membrane that plays crucial roles in the maintenance of crista junctions, inner membrane architecture, and formation of contact sites to the outer membrane. Plays an important role in the maintenance of the MICOS complex stability and the mitochondrial cristae morphology.</text>
</comment>
<comment type="subunit">
    <text evidence="1 2">Component of the mitochondrial contact site and cristae organizing system (MICOS) complex, composed of at least MICOS10/MIC10, CHCHD3/MIC19, CHCHD6/MIC25, APOOL/MIC27, IMMT/MIC60, APOO/MIC23/MIC26 and MICOS13/MIC13 (By similarity). This complex was also known under the names MINOS or MitOS complex. The MICOS complex associates with mitochondrial outer membrane proteins SAMM50, MTX1 and MTX2 (together described as components of the mitochondrial outer membrane sorting assembly machinery (SAM) complex) and DNAJC11, mitochondrial inner membrane protein TMEM11 and with HSPA9 (By similarity). The MICOS and SAM complexes together with DNAJC11 are part of a large protein complex spanning both membranes termed the mitochondrial intermembrane space bridging (MIB) complex (By similarity). Interacts with HSPA1A/HSPA1B and OPA1, preferentially with the soluble OPA1 form (By similarity). Interacts with MICOS13/MIC13, MICOS10/MIC10, CHCHD3/MIC19, CHCHD6/MIC25, SAMM50 and TMEM11 (By similarity). Interacts with APOO/MIC23/MIC26 and APOOL/MIC27 (By similarity). Interacts with ARMC1 (By similarity). Interacts with ARMC12 (By similarity).</text>
</comment>
<comment type="subcellular location">
    <subcellularLocation>
        <location evidence="1">Mitochondrion inner membrane</location>
    </subcellularLocation>
    <subcellularLocation>
        <location evidence="1">Mitochondrion</location>
    </subcellularLocation>
</comment>
<comment type="similarity">
    <text evidence="3">Belongs to the MICOS complex subunit Mic60 family.</text>
</comment>
<accession>P86248</accession>